<organism>
    <name type="scientific">Neisseria meningitidis</name>
    <dbReference type="NCBI Taxonomy" id="487"/>
    <lineage>
        <taxon>Bacteria</taxon>
        <taxon>Pseudomonadati</taxon>
        <taxon>Pseudomonadota</taxon>
        <taxon>Betaproteobacteria</taxon>
        <taxon>Neisseriales</taxon>
        <taxon>Neisseriaceae</taxon>
        <taxon>Neisseria</taxon>
    </lineage>
</organism>
<evidence type="ECO:0000305" key="1"/>
<evidence type="ECO:0007829" key="2">
    <source>
        <dbReference type="PDB" id="6CKM"/>
    </source>
</evidence>
<accession>P0A0Z8</accession>
<accession>Q57385</accession>
<dbReference type="EC" id="2.7.7.43"/>
<dbReference type="EMBL" id="U60146">
    <property type="protein sequence ID" value="AAB60780.1"/>
    <property type="molecule type" value="Genomic_DNA"/>
</dbReference>
<dbReference type="RefSeq" id="WP_002215295.1">
    <property type="nucleotide sequence ID" value="NZ_WSPC01000056.1"/>
</dbReference>
<dbReference type="PDB" id="1EYR">
    <property type="method" value="X-ray"/>
    <property type="resolution" value="2.20 A"/>
    <property type="chains" value="A/B=1-228"/>
</dbReference>
<dbReference type="PDB" id="1EZI">
    <property type="method" value="X-ray"/>
    <property type="resolution" value="2.00 A"/>
    <property type="chains" value="A/B=1-228"/>
</dbReference>
<dbReference type="PDB" id="6CKJ">
    <property type="method" value="X-ray"/>
    <property type="resolution" value="1.75 A"/>
    <property type="chains" value="A=1-228"/>
</dbReference>
<dbReference type="PDB" id="6CKK">
    <property type="method" value="X-ray"/>
    <property type="resolution" value="1.80 A"/>
    <property type="chains" value="A/B=1-228"/>
</dbReference>
<dbReference type="PDB" id="6CKL">
    <property type="method" value="X-ray"/>
    <property type="resolution" value="2.68 A"/>
    <property type="chains" value="A/B/C=1-228"/>
</dbReference>
<dbReference type="PDB" id="6CKM">
    <property type="method" value="X-ray"/>
    <property type="resolution" value="1.54 A"/>
    <property type="chains" value="A=1-228"/>
</dbReference>
<dbReference type="PDBsum" id="1EYR"/>
<dbReference type="PDBsum" id="1EZI"/>
<dbReference type="PDBsum" id="6CKJ"/>
<dbReference type="PDBsum" id="6CKK"/>
<dbReference type="PDBsum" id="6CKL"/>
<dbReference type="PDBsum" id="6CKM"/>
<dbReference type="SMR" id="P0A0Z8"/>
<dbReference type="DrugBank" id="DB04555">
    <property type="generic name" value="Cytidine-5'-Diphosphate"/>
</dbReference>
<dbReference type="OMA" id="IENGSIY"/>
<dbReference type="BRENDA" id="2.7.7.43">
    <property type="organism ID" value="3593"/>
</dbReference>
<dbReference type="EvolutionaryTrace" id="P0A0Z8"/>
<dbReference type="GO" id="GO:0005737">
    <property type="term" value="C:cytoplasm"/>
    <property type="evidence" value="ECO:0007669"/>
    <property type="project" value="UniProtKB-SubCell"/>
</dbReference>
<dbReference type="GO" id="GO:0008781">
    <property type="term" value="F:N-acylneuraminate cytidylyltransferase activity"/>
    <property type="evidence" value="ECO:0007669"/>
    <property type="project" value="UniProtKB-EC"/>
</dbReference>
<dbReference type="CDD" id="cd02513">
    <property type="entry name" value="CMP-NeuAc_Synthase"/>
    <property type="match status" value="1"/>
</dbReference>
<dbReference type="Gene3D" id="3.90.550.10">
    <property type="entry name" value="Spore Coat Polysaccharide Biosynthesis Protein SpsA, Chain A"/>
    <property type="match status" value="1"/>
</dbReference>
<dbReference type="InterPro" id="IPR050793">
    <property type="entry name" value="CMP-NeuNAc_synthase"/>
</dbReference>
<dbReference type="InterPro" id="IPR003329">
    <property type="entry name" value="Cytidylyl_trans"/>
</dbReference>
<dbReference type="InterPro" id="IPR029044">
    <property type="entry name" value="Nucleotide-diphossugar_trans"/>
</dbReference>
<dbReference type="PANTHER" id="PTHR21485">
    <property type="entry name" value="HAD SUPERFAMILY MEMBERS CMAS AND KDSC"/>
    <property type="match status" value="1"/>
</dbReference>
<dbReference type="PANTHER" id="PTHR21485:SF6">
    <property type="entry name" value="N-ACYLNEURAMINATE CYTIDYLYLTRANSFERASE-RELATED"/>
    <property type="match status" value="1"/>
</dbReference>
<dbReference type="Pfam" id="PF02348">
    <property type="entry name" value="CTP_transf_3"/>
    <property type="match status" value="1"/>
</dbReference>
<dbReference type="SUPFAM" id="SSF53448">
    <property type="entry name" value="Nucleotide-diphospho-sugar transferases"/>
    <property type="match status" value="1"/>
</dbReference>
<feature type="chain" id="PRO_0000213206" description="N-acylneuraminate cytidylyltransferase">
    <location>
        <begin position="1"/>
        <end position="228"/>
    </location>
</feature>
<feature type="strand" evidence="2">
    <location>
        <begin position="4"/>
        <end position="10"/>
    </location>
</feature>
<feature type="strand" evidence="2">
    <location>
        <begin position="16"/>
        <end position="18"/>
    </location>
</feature>
<feature type="helix" evidence="2">
    <location>
        <begin position="21"/>
        <end position="23"/>
    </location>
</feature>
<feature type="helix" evidence="2">
    <location>
        <begin position="31"/>
        <end position="42"/>
    </location>
</feature>
<feature type="strand" evidence="2">
    <location>
        <begin position="46"/>
        <end position="53"/>
    </location>
</feature>
<feature type="helix" evidence="2">
    <location>
        <begin position="55"/>
        <end position="63"/>
    </location>
</feature>
<feature type="strand" evidence="2">
    <location>
        <begin position="67"/>
        <end position="70"/>
    </location>
</feature>
<feature type="helix" evidence="2">
    <location>
        <begin position="73"/>
        <end position="75"/>
    </location>
</feature>
<feature type="helix" evidence="2">
    <location>
        <begin position="82"/>
        <end position="93"/>
    </location>
</feature>
<feature type="strand" evidence="2">
    <location>
        <begin position="97"/>
        <end position="102"/>
    </location>
</feature>
<feature type="helix" evidence="2">
    <location>
        <begin position="112"/>
        <end position="119"/>
    </location>
</feature>
<feature type="turn" evidence="2">
    <location>
        <begin position="124"/>
        <end position="126"/>
    </location>
</feature>
<feature type="strand" evidence="2">
    <location>
        <begin position="130"/>
        <end position="135"/>
    </location>
</feature>
<feature type="strand" evidence="2">
    <location>
        <begin position="144"/>
        <end position="148"/>
    </location>
</feature>
<feature type="strand" evidence="2">
    <location>
        <begin position="151"/>
        <end position="156"/>
    </location>
</feature>
<feature type="helix" evidence="2">
    <location>
        <begin position="158"/>
        <end position="162"/>
    </location>
</feature>
<feature type="helix" evidence="2">
    <location>
        <begin position="165"/>
        <end position="167"/>
    </location>
</feature>
<feature type="strand" evidence="2">
    <location>
        <begin position="172"/>
        <end position="182"/>
    </location>
</feature>
<feature type="helix" evidence="2">
    <location>
        <begin position="183"/>
        <end position="189"/>
    </location>
</feature>
<feature type="strand" evidence="2">
    <location>
        <begin position="198"/>
        <end position="201"/>
    </location>
</feature>
<feature type="helix" evidence="2">
    <location>
        <begin position="205"/>
        <end position="207"/>
    </location>
</feature>
<feature type="helix" evidence="2">
    <location>
        <begin position="213"/>
        <end position="223"/>
    </location>
</feature>
<comment type="catalytic activity">
    <reaction>
        <text>an N-acylneuraminate + CTP = a CMP-N-acyl-beta-neuraminate + diphosphate</text>
        <dbReference type="Rhea" id="RHEA:11344"/>
        <dbReference type="ChEBI" id="CHEBI:33019"/>
        <dbReference type="ChEBI" id="CHEBI:37563"/>
        <dbReference type="ChEBI" id="CHEBI:60073"/>
        <dbReference type="ChEBI" id="CHEBI:68671"/>
        <dbReference type="EC" id="2.7.7.43"/>
    </reaction>
</comment>
<comment type="subcellular location">
    <subcellularLocation>
        <location>Cytoplasm</location>
    </subcellularLocation>
</comment>
<comment type="similarity">
    <text evidence="1">Belongs to the CMP-NeuNAc synthase family.</text>
</comment>
<keyword id="KW-0002">3D-structure</keyword>
<keyword id="KW-0963">Cytoplasm</keyword>
<keyword id="KW-0548">Nucleotidyltransferase</keyword>
<keyword id="KW-0808">Transferase</keyword>
<name>NEUA_NEIME</name>
<gene>
    <name type="primary">neuA</name>
    <name type="synonym">siaB</name>
    <name type="synonym">synB</name>
</gene>
<reference key="1">
    <citation type="journal article" date="1997" name="Biotechnol. Lett.">
        <title>Purification and characterization of the recombinant CMP-sialic acid synthetase from Neisseria meningitidis.</title>
        <authorList>
            <person name="Gilbert M."/>
            <person name="Watson D.C."/>
            <person name="Wakarchuk W.W."/>
        </authorList>
    </citation>
    <scope>NUCLEOTIDE SEQUENCE [GENOMIC DNA]</scope>
    <source>
        <strain>NRCC 4030 / 406Y / Serogroup Y</strain>
    </source>
</reference>
<sequence length="228" mass="24892">MEKQNIAVILARQNSKGLPLKNLRKMNGISLLGHTINAAISSKCFDRIIVSTDGGLIAEEAKNFGVEVVLRPAELASDTASSISGVIHALETIGSNSGTVTLLQPTSPLRTGAHIREAFSLFDEKIKGSVVSACPMEHHPLKTLLQINNGEYAPMRHLSDLEQPRQQLPQAFRPNGAIYINDTASLIANNCFFIAPTKLYIMSHQDSIDIDTELDLQQAENILNHKES</sequence>
<proteinExistence type="evidence at protein level"/>
<protein>
    <recommendedName>
        <fullName>N-acylneuraminate cytidylyltransferase</fullName>
        <ecNumber>2.7.7.43</ecNumber>
    </recommendedName>
    <alternativeName>
        <fullName>CMP-N-acetylneuraminic acid synthase</fullName>
        <shortName>CMP-NeuNAc synthase</shortName>
    </alternativeName>
    <alternativeName>
        <fullName>CMP-sialic acid synthase</fullName>
    </alternativeName>
</protein>